<name>LYK3_MEDTR</name>
<gene>
    <name evidence="15" type="primary">LYK3</name>
    <name evidence="14" type="synonym">HCL</name>
    <name evidence="17" type="synonym">RLK3</name>
    <name evidence="19" type="ordered locus">MTR_5g086130</name>
</gene>
<protein>
    <recommendedName>
        <fullName evidence="15">LysM domain receptor-like kinase 3</fullName>
        <shortName evidence="17">LysM-containing receptor-like kinase 3</shortName>
        <shortName evidence="16">MtLYK3</shortName>
        <ecNumber evidence="3 11">2.7.11.1</ecNumber>
    </recommendedName>
    <alternativeName>
        <fullName evidence="17">LysM receptor kinase K1B</fullName>
    </alternativeName>
    <alternativeName>
        <fullName evidence="14">Protein HAIR CURLING</fullName>
    </alternativeName>
</protein>
<dbReference type="EC" id="2.7.11.1" evidence="3 11"/>
<dbReference type="EMBL" id="AY372402">
    <property type="protein sequence ID" value="AAQ73155.1"/>
    <property type="molecule type" value="Genomic_DNA"/>
</dbReference>
<dbReference type="EMBL" id="AY372406">
    <property type="protein sequence ID" value="AAQ73159.1"/>
    <property type="molecule type" value="mRNA"/>
</dbReference>
<dbReference type="EMBL" id="AM420448">
    <property type="protein sequence ID" value="CAM06620.1"/>
    <property type="molecule type" value="Genomic_DNA"/>
</dbReference>
<dbReference type="EMBL" id="AM420450">
    <property type="protein sequence ID" value="CAM06621.1"/>
    <property type="molecule type" value="Genomic_DNA"/>
</dbReference>
<dbReference type="EMBL" id="AM420451">
    <property type="protein sequence ID" value="CAM06622.1"/>
    <property type="molecule type" value="Genomic_DNA"/>
</dbReference>
<dbReference type="EMBL" id="AM420459">
    <property type="protein sequence ID" value="CAM06630.1"/>
    <property type="molecule type" value="mRNA"/>
</dbReference>
<dbReference type="EMBL" id="CM001221">
    <property type="protein sequence ID" value="AES99916.1"/>
    <property type="molecule type" value="Genomic_DNA"/>
</dbReference>
<dbReference type="EMBL" id="CM001221">
    <property type="protein sequence ID" value="KEH28326.1"/>
    <property type="molecule type" value="Genomic_DNA"/>
</dbReference>
<dbReference type="RefSeq" id="XP_003616958.1">
    <property type="nucleotide sequence ID" value="XM_003616910.2"/>
</dbReference>
<dbReference type="RefSeq" id="XP_013454295.1">
    <property type="nucleotide sequence ID" value="XM_013598841.1"/>
</dbReference>
<dbReference type="PDB" id="6XWE">
    <property type="method" value="X-ray"/>
    <property type="resolution" value="1.49 A"/>
    <property type="chains" value="A=24-229"/>
</dbReference>
<dbReference type="PDB" id="9GFZ">
    <property type="method" value="X-ray"/>
    <property type="resolution" value="2.50 A"/>
    <property type="chains" value="A/B=302-597"/>
</dbReference>
<dbReference type="PDBsum" id="6XWE"/>
<dbReference type="PDBsum" id="9GFZ"/>
<dbReference type="SMR" id="Q6UD73"/>
<dbReference type="IntAct" id="Q6UD73">
    <property type="interactions" value="1"/>
</dbReference>
<dbReference type="MINT" id="Q6UD73"/>
<dbReference type="STRING" id="3880.Q6UD73"/>
<dbReference type="GlyCosmos" id="Q6UD73">
    <property type="glycosylation" value="3 sites, No reported glycans"/>
</dbReference>
<dbReference type="PaxDb" id="3880-AES99916"/>
<dbReference type="EnsemblPlants" id="rna32903">
    <molecule id="Q6UD73-1"/>
    <property type="protein sequence ID" value="RHN57370.1"/>
    <property type="gene ID" value="gene32903"/>
</dbReference>
<dbReference type="Gramene" id="rna32903">
    <molecule id="Q6UD73-1"/>
    <property type="protein sequence ID" value="RHN57370.1"/>
    <property type="gene ID" value="gene32903"/>
</dbReference>
<dbReference type="eggNOG" id="ENOG502QPX8">
    <property type="taxonomic scope" value="Eukaryota"/>
</dbReference>
<dbReference type="OMA" id="SCGNSHV"/>
<dbReference type="Proteomes" id="UP000002051">
    <property type="component" value="Chromosome 5"/>
</dbReference>
<dbReference type="ExpressionAtlas" id="Q6UD73">
    <property type="expression patterns" value="differential"/>
</dbReference>
<dbReference type="GO" id="GO:0005886">
    <property type="term" value="C:plasma membrane"/>
    <property type="evidence" value="ECO:0000314"/>
    <property type="project" value="UniProtKB"/>
</dbReference>
<dbReference type="GO" id="GO:0005775">
    <property type="term" value="C:vacuolar lumen"/>
    <property type="evidence" value="ECO:0000314"/>
    <property type="project" value="UniProtKB"/>
</dbReference>
<dbReference type="GO" id="GO:0005524">
    <property type="term" value="F:ATP binding"/>
    <property type="evidence" value="ECO:0007669"/>
    <property type="project" value="UniProtKB-KW"/>
</dbReference>
<dbReference type="GO" id="GO:0016301">
    <property type="term" value="F:kinase activity"/>
    <property type="evidence" value="ECO:0000314"/>
    <property type="project" value="UniProtKB"/>
</dbReference>
<dbReference type="GO" id="GO:0106310">
    <property type="term" value="F:protein serine kinase activity"/>
    <property type="evidence" value="ECO:0007669"/>
    <property type="project" value="RHEA"/>
</dbReference>
<dbReference type="GO" id="GO:0004674">
    <property type="term" value="F:protein serine/threonine kinase activity"/>
    <property type="evidence" value="ECO:0007669"/>
    <property type="project" value="UniProtKB-KW"/>
</dbReference>
<dbReference type="GO" id="GO:0019199">
    <property type="term" value="F:transmembrane receptor protein kinase activity"/>
    <property type="evidence" value="ECO:0007669"/>
    <property type="project" value="InterPro"/>
</dbReference>
<dbReference type="GO" id="GO:0045087">
    <property type="term" value="P:innate immune response"/>
    <property type="evidence" value="ECO:0007669"/>
    <property type="project" value="InterPro"/>
</dbReference>
<dbReference type="GO" id="GO:0009877">
    <property type="term" value="P:nodulation"/>
    <property type="evidence" value="ECO:0000315"/>
    <property type="project" value="UniProtKB"/>
</dbReference>
<dbReference type="GO" id="GO:0046777">
    <property type="term" value="P:protein autophosphorylation"/>
    <property type="evidence" value="ECO:0000314"/>
    <property type="project" value="UniProtKB"/>
</dbReference>
<dbReference type="GO" id="GO:0009609">
    <property type="term" value="P:response to symbiotic bacterium"/>
    <property type="evidence" value="ECO:0000315"/>
    <property type="project" value="UniProtKB"/>
</dbReference>
<dbReference type="FunFam" id="3.30.200.20:FF:000468">
    <property type="entry name" value="LysM receptor kinase 2"/>
    <property type="match status" value="1"/>
</dbReference>
<dbReference type="FunFam" id="1.10.510.10:FF:000468">
    <property type="entry name" value="PTI1-like tyrosine-protein kinase 3"/>
    <property type="match status" value="1"/>
</dbReference>
<dbReference type="Gene3D" id="3.30.200.20">
    <property type="entry name" value="Phosphorylase Kinase, domain 1"/>
    <property type="match status" value="1"/>
</dbReference>
<dbReference type="Gene3D" id="1.10.510.10">
    <property type="entry name" value="Transferase(Phosphotransferase) domain 1"/>
    <property type="match status" value="1"/>
</dbReference>
<dbReference type="InterPro" id="IPR044812">
    <property type="entry name" value="CERK1/LYK3-like"/>
</dbReference>
<dbReference type="InterPro" id="IPR011009">
    <property type="entry name" value="Kinase-like_dom_sf"/>
</dbReference>
<dbReference type="InterPro" id="IPR056562">
    <property type="entry name" value="LysM2_CERK1_LYK3_4_5"/>
</dbReference>
<dbReference type="InterPro" id="IPR000719">
    <property type="entry name" value="Prot_kinase_dom"/>
</dbReference>
<dbReference type="InterPro" id="IPR017441">
    <property type="entry name" value="Protein_kinase_ATP_BS"/>
</dbReference>
<dbReference type="InterPro" id="IPR001245">
    <property type="entry name" value="Ser-Thr/Tyr_kinase_cat_dom"/>
</dbReference>
<dbReference type="InterPro" id="IPR008271">
    <property type="entry name" value="Ser/Thr_kinase_AS"/>
</dbReference>
<dbReference type="PANTHER" id="PTHR46204">
    <property type="entry name" value="CHITIN ELICITOR RECEPTOR KINASE 1-RELATED"/>
    <property type="match status" value="1"/>
</dbReference>
<dbReference type="PANTHER" id="PTHR46204:SF15">
    <property type="entry name" value="LYSM DOMAIN RECEPTOR-LIKE KINASE 3"/>
    <property type="match status" value="1"/>
</dbReference>
<dbReference type="Pfam" id="PF23472">
    <property type="entry name" value="LysM2_CERK1_LYK3_4_5"/>
    <property type="match status" value="1"/>
</dbReference>
<dbReference type="Pfam" id="PF23577">
    <property type="entry name" value="LysM_RLK"/>
    <property type="match status" value="1"/>
</dbReference>
<dbReference type="Pfam" id="PF07714">
    <property type="entry name" value="PK_Tyr_Ser-Thr"/>
    <property type="match status" value="1"/>
</dbReference>
<dbReference type="SMART" id="SM00220">
    <property type="entry name" value="S_TKc"/>
    <property type="match status" value="1"/>
</dbReference>
<dbReference type="SUPFAM" id="SSF56112">
    <property type="entry name" value="Protein kinase-like (PK-like)"/>
    <property type="match status" value="1"/>
</dbReference>
<dbReference type="PROSITE" id="PS00107">
    <property type="entry name" value="PROTEIN_KINASE_ATP"/>
    <property type="match status" value="1"/>
</dbReference>
<dbReference type="PROSITE" id="PS50011">
    <property type="entry name" value="PROTEIN_KINASE_DOM"/>
    <property type="match status" value="1"/>
</dbReference>
<dbReference type="PROSITE" id="PS00108">
    <property type="entry name" value="PROTEIN_KINASE_ST"/>
    <property type="match status" value="1"/>
</dbReference>
<proteinExistence type="evidence at protein level"/>
<evidence type="ECO:0000250" key="1">
    <source>
        <dbReference type="UniProtKB" id="A8R7E6"/>
    </source>
</evidence>
<evidence type="ECO:0000255" key="2"/>
<evidence type="ECO:0000255" key="3">
    <source>
        <dbReference type="PROSITE-ProRule" id="PRU00159"/>
    </source>
</evidence>
<evidence type="ECO:0000255" key="4">
    <source>
        <dbReference type="PROSITE-ProRule" id="PRU00498"/>
    </source>
</evidence>
<evidence type="ECO:0000255" key="5">
    <source>
        <dbReference type="PROSITE-ProRule" id="PRU01118"/>
    </source>
</evidence>
<evidence type="ECO:0000256" key="6">
    <source>
        <dbReference type="SAM" id="MobiDB-lite"/>
    </source>
</evidence>
<evidence type="ECO:0000269" key="7">
    <source>
    </source>
</evidence>
<evidence type="ECO:0000269" key="8">
    <source>
    </source>
</evidence>
<evidence type="ECO:0000269" key="9">
    <source>
    </source>
</evidence>
<evidence type="ECO:0000269" key="10">
    <source>
    </source>
</evidence>
<evidence type="ECO:0000269" key="11">
    <source>
    </source>
</evidence>
<evidence type="ECO:0000269" key="12">
    <source>
    </source>
</evidence>
<evidence type="ECO:0000269" key="13">
    <source>
    </source>
</evidence>
<evidence type="ECO:0000303" key="14">
    <source>
    </source>
</evidence>
<evidence type="ECO:0000303" key="15">
    <source>
    </source>
</evidence>
<evidence type="ECO:0000303" key="16">
    <source>
    </source>
</evidence>
<evidence type="ECO:0000305" key="17"/>
<evidence type="ECO:0000312" key="18">
    <source>
        <dbReference type="EMBL" id="AAQ73159.1"/>
    </source>
</evidence>
<evidence type="ECO:0000312" key="19">
    <source>
        <dbReference type="EMBL" id="AES99916.1"/>
    </source>
</evidence>
<evidence type="ECO:0007829" key="20">
    <source>
        <dbReference type="PDB" id="6XWE"/>
    </source>
</evidence>
<evidence type="ECO:0007829" key="21">
    <source>
        <dbReference type="PDB" id="9GFZ"/>
    </source>
</evidence>
<keyword id="KW-0002">3D-structure</keyword>
<keyword id="KW-0025">Alternative splicing</keyword>
<keyword id="KW-0067">ATP-binding</keyword>
<keyword id="KW-1003">Cell membrane</keyword>
<keyword id="KW-1015">Disulfide bond</keyword>
<keyword id="KW-0325">Glycoprotein</keyword>
<keyword id="KW-0418">Kinase</keyword>
<keyword id="KW-0472">Membrane</keyword>
<keyword id="KW-0536">Nodulation</keyword>
<keyword id="KW-0547">Nucleotide-binding</keyword>
<keyword id="KW-0597">Phosphoprotein</keyword>
<keyword id="KW-0675">Receptor</keyword>
<keyword id="KW-1185">Reference proteome</keyword>
<keyword id="KW-0723">Serine/threonine-protein kinase</keyword>
<keyword id="KW-0732">Signal</keyword>
<keyword id="KW-0808">Transferase</keyword>
<keyword id="KW-0812">Transmembrane</keyword>
<keyword id="KW-1133">Transmembrane helix</keyword>
<keyword id="KW-0926">Vacuole</keyword>
<sequence>MNLKNGLLLFILFLDCVFFKVESKCVKGCDVALASYYIIPSIQLRNISNFMQSKIVLTNSFDVIMSYNRDVVFDKSGLISYTRINVPFPCECIGGEFLGHVFEYTTKEGDDYDLIANTYYASLTTVELLKKFNSYDPNHIPVKAKINVTVICSCGNSQISKDYGLFVTYPLRSDDTLAKIATKAGLDEGLIQNFNQDANFSIGSGIVFIPGRDQNGHFFPLYSRTGIAKGSAVGIAMAGIFGLLLFVIYIYAKYFQKKEEEKTKLPQTSRAFSTQDASGSAEYETSGSSGHATGSAAGLTGIMVAKSTEFTYQELAKATNNFSLDNKIGQGGFGAVYYAELRGEKTAIKKMDVQASSEFLCELKVLTHVHHLNLVRLIGYCVEGSLFLVYEHIDNGNLGQYLHGIGTEPLPWSSRVQIALDSARGLEYIHEHTVPVYIHRDVKSANILIDKNLRGKVADFGLTKLIEVGNSTLHTRLVGTFGYMPPEYAQYGDVSPKIDVYAFGVVLYELITAKNAVLKTGESVAESKGLVQLFEEALHRMDPLEGLRKLVDPRLKENYPIDSVLKMAQLGRACTRDNPLLRPSMRSIVVALMTLSSPTEDCDDDSSYENQSLINLLSTR</sequence>
<accession>Q6UD73</accession>
<accession>A0A072UFY4</accession>
<accession>A6H2J7</accession>
<accession>A6H2J8</accession>
<accession>A6H2K7</accession>
<reference key="1">
    <citation type="journal article" date="2003" name="Science">
        <title>LysM domain receptor kinases regulating rhizobial Nod factor-induced infection.</title>
        <authorList>
            <person name="Limpens E."/>
            <person name="Franken C."/>
            <person name="Smit P."/>
            <person name="Willemse J."/>
            <person name="Bisseling T."/>
            <person name="Geurts R."/>
        </authorList>
    </citation>
    <scope>NUCLEOTIDE SEQUENCE [GENOMIC DNA / MRNA] (ISOFORM 1)</scope>
    <scope>FUNCTION</scope>
    <scope>DISRUPTION PHENOTYPE</scope>
    <scope>TISSUE SPECIFICITY</scope>
    <source>
        <strain>cv. Jemalong A17</strain>
    </source>
</reference>
<reference key="2">
    <citation type="journal article" date="2007" name="Plant Physiol.">
        <title>Medicago LYK3, an entry receptor in rhizobial nodulation factor signaling.</title>
        <authorList>
            <person name="Smit P."/>
            <person name="Limpens E."/>
            <person name="Geurts R."/>
            <person name="Fedorova E."/>
            <person name="Dolgikh E."/>
            <person name="Gough C."/>
            <person name="Bisseling T."/>
        </authorList>
    </citation>
    <scope>NUCLEOTIDE SEQUENCE [GENOMIC DNA]</scope>
    <scope>NUCLEOTIDE SEQUENCE [MRNA] OF 121-276 (ISOFORM 1/2)</scope>
    <scope>FUNCTION</scope>
    <scope>MUTAGENESIS OF PRO-87 AND GLY-334</scope>
    <scope>DISRUPTION PHENOTYPE</scope>
    <source>
        <tissue>Root</tissue>
    </source>
</reference>
<reference key="3">
    <citation type="journal article" date="2011" name="Nature">
        <title>The Medicago genome provides insight into the evolution of rhizobial symbioses.</title>
        <authorList>
            <person name="Young N.D."/>
            <person name="Debelle F."/>
            <person name="Oldroyd G.E.D."/>
            <person name="Geurts R."/>
            <person name="Cannon S.B."/>
            <person name="Udvardi M.K."/>
            <person name="Benedito V.A."/>
            <person name="Mayer K.F.X."/>
            <person name="Gouzy J."/>
            <person name="Schoof H."/>
            <person name="Van de Peer Y."/>
            <person name="Proost S."/>
            <person name="Cook D.R."/>
            <person name="Meyers B.C."/>
            <person name="Spannagl M."/>
            <person name="Cheung F."/>
            <person name="De Mita S."/>
            <person name="Krishnakumar V."/>
            <person name="Gundlach H."/>
            <person name="Zhou S."/>
            <person name="Mudge J."/>
            <person name="Bharti A.K."/>
            <person name="Murray J.D."/>
            <person name="Naoumkina M.A."/>
            <person name="Rosen B."/>
            <person name="Silverstein K.A.T."/>
            <person name="Tang H."/>
            <person name="Rombauts S."/>
            <person name="Zhao P.X."/>
            <person name="Zhou P."/>
            <person name="Barbe V."/>
            <person name="Bardou P."/>
            <person name="Bechner M."/>
            <person name="Bellec A."/>
            <person name="Berger A."/>
            <person name="Berges H."/>
            <person name="Bidwell S."/>
            <person name="Bisseling T."/>
            <person name="Choisne N."/>
            <person name="Couloux A."/>
            <person name="Denny R."/>
            <person name="Deshpande S."/>
            <person name="Dai X."/>
            <person name="Doyle J.J."/>
            <person name="Dudez A.-M."/>
            <person name="Farmer A.D."/>
            <person name="Fouteau S."/>
            <person name="Franken C."/>
            <person name="Gibelin C."/>
            <person name="Gish J."/>
            <person name="Goldstein S."/>
            <person name="Gonzalez A.J."/>
            <person name="Green P.J."/>
            <person name="Hallab A."/>
            <person name="Hartog M."/>
            <person name="Hua A."/>
            <person name="Humphray S.J."/>
            <person name="Jeong D.-H."/>
            <person name="Jing Y."/>
            <person name="Jocker A."/>
            <person name="Kenton S.M."/>
            <person name="Kim D.-J."/>
            <person name="Klee K."/>
            <person name="Lai H."/>
            <person name="Lang C."/>
            <person name="Lin S."/>
            <person name="Macmil S.L."/>
            <person name="Magdelenat G."/>
            <person name="Matthews L."/>
            <person name="McCorrison J."/>
            <person name="Monaghan E.L."/>
            <person name="Mun J.-H."/>
            <person name="Najar F.Z."/>
            <person name="Nicholson C."/>
            <person name="Noirot C."/>
            <person name="O'Bleness M."/>
            <person name="Paule C.R."/>
            <person name="Poulain J."/>
            <person name="Prion F."/>
            <person name="Qin B."/>
            <person name="Qu C."/>
            <person name="Retzel E.F."/>
            <person name="Riddle C."/>
            <person name="Sallet E."/>
            <person name="Samain S."/>
            <person name="Samson N."/>
            <person name="Sanders I."/>
            <person name="Saurat O."/>
            <person name="Scarpelli C."/>
            <person name="Schiex T."/>
            <person name="Segurens B."/>
            <person name="Severin A.J."/>
            <person name="Sherrier D.J."/>
            <person name="Shi R."/>
            <person name="Sims S."/>
            <person name="Singer S.R."/>
            <person name="Sinharoy S."/>
            <person name="Sterck L."/>
            <person name="Viollet A."/>
            <person name="Wang B.-B."/>
            <person name="Wang K."/>
            <person name="Wang M."/>
            <person name="Wang X."/>
            <person name="Warfsmann J."/>
            <person name="Weissenbach J."/>
            <person name="White D.D."/>
            <person name="White J.D."/>
            <person name="Wiley G.B."/>
            <person name="Wincker P."/>
            <person name="Xing Y."/>
            <person name="Yang L."/>
            <person name="Yao Z."/>
            <person name="Ying F."/>
            <person name="Zhai J."/>
            <person name="Zhou L."/>
            <person name="Zuber A."/>
            <person name="Denarie J."/>
            <person name="Dixon R.A."/>
            <person name="May G.D."/>
            <person name="Schwartz D.C."/>
            <person name="Rogers J."/>
            <person name="Quetier F."/>
            <person name="Town C.D."/>
            <person name="Roe B.A."/>
        </authorList>
    </citation>
    <scope>NUCLEOTIDE SEQUENCE [LARGE SCALE GENOMIC DNA]</scope>
    <source>
        <strain>cv. Jemalong A17</strain>
    </source>
</reference>
<reference key="4">
    <citation type="journal article" date="2014" name="BMC Genomics">
        <title>An improved genome release (version Mt4.0) for the model legume Medicago truncatula.</title>
        <authorList>
            <person name="Tang H."/>
            <person name="Krishnakumar V."/>
            <person name="Bidwell S."/>
            <person name="Rosen B."/>
            <person name="Chan A."/>
            <person name="Zhou S."/>
            <person name="Gentzbittel L."/>
            <person name="Childs K.L."/>
            <person name="Yandell M."/>
            <person name="Gundlach H."/>
            <person name="Mayer K.F."/>
            <person name="Schwartz D.C."/>
            <person name="Town C.D."/>
        </authorList>
    </citation>
    <scope>GENOME REANNOTATION</scope>
    <source>
        <strain>cv. Jemalong A17</strain>
    </source>
</reference>
<reference key="5">
    <citation type="journal article" date="2001" name="Development">
        <title>The HCL gene of Medicago truncatula controls Rhizobium-induced root hair curling.</title>
        <authorList>
            <person name="Catoira R."/>
            <person name="Timmers A.C."/>
            <person name="Maillet F."/>
            <person name="Galera C."/>
            <person name="Penmetsa R.V."/>
            <person name="Cook D."/>
            <person name="Denarie J."/>
            <person name="Gough C."/>
        </authorList>
    </citation>
    <scope>FUNCTION</scope>
    <scope>MUTAGENESIS OF PRO-87 AND GLY-334</scope>
    <scope>DISRUPTION PHENOTYPE</scope>
    <source>
        <strain>cv. Jemalong A17</strain>
    </source>
</reference>
<reference key="6">
    <citation type="journal article" date="2006" name="Plant Physiol.">
        <title>The Medicago truncatula lysin [corrected] motif-receptor-like kinase gene family includes NFP and new nodule-expressed genes.</title>
        <authorList>
            <person name="Arrighi J.-F."/>
            <person name="Barre A."/>
            <person name="Ben Amor B."/>
            <person name="Bersoult A."/>
            <person name="Soriano L.C."/>
            <person name="Mirabella R."/>
            <person name="de Carvalho-Niebel F."/>
            <person name="Journet E.-P."/>
            <person name="Gherardi M."/>
            <person name="Huguet T."/>
            <person name="Geurts R."/>
            <person name="Denarie J."/>
            <person name="Rouge P."/>
            <person name="Gough C."/>
        </authorList>
    </citation>
    <scope>AUTOPHOSPHORYLATION</scope>
    <scope>GENE FAMILY</scope>
    <source>
        <strain>cv. Jemalong A17</strain>
    </source>
</reference>
<reference key="7">
    <citation type="journal article" date="2010" name="Plant Cell">
        <title>The Medicago truncatula E3 ubiquitin ligase PUB1 interacts with the LYK3 symbiotic receptor and negatively regulates infection and nodulation.</title>
        <authorList>
            <person name="Mbengue M."/>
            <person name="Camut S."/>
            <person name="de Carvalho-Niebel F."/>
            <person name="Deslandes L."/>
            <person name="Froidure S."/>
            <person name="Klaus-Heisen D."/>
            <person name="Moreau S."/>
            <person name="Rivas S."/>
            <person name="Timmers T."/>
            <person name="Herve C."/>
            <person name="Cullimore J."/>
            <person name="Lefebvre B."/>
        </authorList>
    </citation>
    <scope>FUNCTION</scope>
    <scope>DISRUPTION PHENOTYPE</scope>
    <scope>INTERACTION WITH PUB1</scope>
    <scope>SUBCELLULAR LOCATION</scope>
    <scope>DEVELOPMENTAL STAGE</scope>
    <scope>TISSUE SPECIFICITY</scope>
    <scope>AUTOPHOSPHORYLATION</scope>
    <scope>CATALYTIC ACTIVITY</scope>
    <source>
        <strain>cv. Jemalong A17</strain>
    </source>
</reference>
<reference key="8">
    <citation type="journal article" date="2013" name="New Phytol.">
        <title>NFP, a LysM protein controlling Nod factor perception, also intervenes in Medicago truncatula resistance to pathogens.</title>
        <authorList>
            <person name="Rey T."/>
            <person name="Nars A."/>
            <person name="Bonhomme M."/>
            <person name="Bottin A."/>
            <person name="Huguet S."/>
            <person name="Balzergue S."/>
            <person name="Jardinaud M.-F."/>
            <person name="Bono J.-J."/>
            <person name="Cullimore J."/>
            <person name="Dumas B."/>
            <person name="Gough C."/>
            <person name="Jacquet C."/>
        </authorList>
    </citation>
    <scope>DISRUPTION PHENOTYPE</scope>
</reference>
<reference key="9">
    <citation type="journal article" date="2014" name="Plant Cell">
        <title>Nod factor receptors form heteromeric complexes and are essential for intracellular infection in medicago nodules.</title>
        <authorList>
            <person name="Moling S."/>
            <person name="Pietraszewska-Bogiel A."/>
            <person name="Postma M."/>
            <person name="Fedorova E."/>
            <person name="Hink M.A."/>
            <person name="Limpens E."/>
            <person name="Gadella T.W.J."/>
            <person name="Bisseling T."/>
        </authorList>
    </citation>
    <scope>FUNCTION</scope>
    <scope>DISRUPTION PHENOTYPE</scope>
    <scope>SUBUNIT</scope>
    <scope>SUBCELLULAR LOCATION</scope>
    <scope>TISSUE SPECIFICITY</scope>
    <scope>DEVELOPMENTAL STAGE</scope>
    <source>
        <strain>cv. Jemalong A17</strain>
    </source>
</reference>
<comment type="function">
    <text evidence="7 8 10 11 13">Putative receptor for S.meliloti Nod factor signals essential for the establishment of the nitrogen-fixing, root nodule symbiosis with S.meliloti (PubMed:12947035, PubMed:17586690, PubMed:20971894, PubMed:25351493). Involved in the control of root hair curling after S.meliloti infection, probably by modulating the reorganization of the microtubular cytoskeleton in epidermal and cortical cells (PubMed:11290290, PubMed:17586690). Regulates a subset of Nod factor-induced genes (PubMed:17586690).</text>
</comment>
<comment type="catalytic activity">
    <reaction evidence="11">
        <text>L-seryl-[protein] + ATP = O-phospho-L-seryl-[protein] + ADP + H(+)</text>
        <dbReference type="Rhea" id="RHEA:17989"/>
        <dbReference type="Rhea" id="RHEA-COMP:9863"/>
        <dbReference type="Rhea" id="RHEA-COMP:11604"/>
        <dbReference type="ChEBI" id="CHEBI:15378"/>
        <dbReference type="ChEBI" id="CHEBI:29999"/>
        <dbReference type="ChEBI" id="CHEBI:30616"/>
        <dbReference type="ChEBI" id="CHEBI:83421"/>
        <dbReference type="ChEBI" id="CHEBI:456216"/>
        <dbReference type="EC" id="2.7.11.1"/>
    </reaction>
</comment>
<comment type="catalytic activity">
    <reaction evidence="11">
        <text>L-threonyl-[protein] + ATP = O-phospho-L-threonyl-[protein] + ADP + H(+)</text>
        <dbReference type="Rhea" id="RHEA:46608"/>
        <dbReference type="Rhea" id="RHEA-COMP:11060"/>
        <dbReference type="Rhea" id="RHEA-COMP:11605"/>
        <dbReference type="ChEBI" id="CHEBI:15378"/>
        <dbReference type="ChEBI" id="CHEBI:30013"/>
        <dbReference type="ChEBI" id="CHEBI:30616"/>
        <dbReference type="ChEBI" id="CHEBI:61977"/>
        <dbReference type="ChEBI" id="CHEBI:456216"/>
        <dbReference type="EC" id="2.7.11.1"/>
    </reaction>
</comment>
<comment type="subunit">
    <text evidence="1 11 13">Forms homodimers and homooligomers (By similarity). Forms heteromeric complexes with NFP at the cell periphery in nodules (PubMed:25351493). Interacts with PUB1 (PubMed:20971894).</text>
</comment>
<comment type="interaction">
    <interactant intactId="EBI-12551665">
        <id>Q6UD73</id>
    </interactant>
    <interactant intactId="EBI-12551650">
        <id>G7KAT5</id>
        <label>11409451</label>
    </interactant>
    <organismsDiffer>false</organismsDiffer>
    <experiments>6</experiments>
</comment>
<comment type="subcellular location">
    <subcellularLocation>
        <location evidence="11 13">Cell membrane</location>
        <topology evidence="2">Single-pass membrane protein</topology>
    </subcellularLocation>
    <subcellularLocation>
        <location evidence="13">Vacuole lumen</location>
    </subcellularLocation>
    <text evidence="13">Removed from the plasma membrane upon the release of rhizobia into the host cytoplasm. Vacuolar localization is observed in cells undergoing breakdown of the receptors.</text>
</comment>
<comment type="alternative products">
    <event type="alternative splicing"/>
    <isoform>
        <id>Q6UD73-1</id>
        <name>1</name>
        <sequence type="displayed"/>
    </isoform>
    <isoform>
        <id>Q6UD73-2</id>
        <name>2</name>
        <sequence type="described" ref="VSP_058382"/>
    </isoform>
</comment>
<comment type="tissue specificity">
    <text evidence="8 11 13">Expressed in the epidermal and root hair cells of the developing root hair zone during nonsymbiotic growth. Accumulates in roots and nodules during symbiotic growth with rhizobia (PubMed:12947035, PubMed:20971894). Localized at the cell periphery in a narrow zone of about two cell layers (e.g. L1/L2 zone) at the nodule apex upon infection by rhizobia, from the meristem to the infection zone (at protein level) (PubMed:25351493).</text>
</comment>
<comment type="developmental stage">
    <text evidence="11 13">Following inoculation with S.meliloti, accumulates strongly in the nodule primordia. In young nodules, expressed in a broad apical region and in the vasculature. In mature nodules, predominantly observed in the apical part of the nodule encompassing the pre-infection and infection zones (PubMed:20971894). Localized on infection threads before rhizobia are released (PubMed:25351493).</text>
</comment>
<comment type="PTM">
    <text evidence="9 11">Autophosphorylated.</text>
</comment>
<comment type="disruption phenotype">
    <text evidence="7 8 10 11 12 13">In the lyk3-4 mutant, increased nodulation in plants infected by S.meliloti, mostly resulting in tubular infection threads, and, to a lower extent, in sac-like structures (PubMed:12947035, PubMed:20971894). The weak hcl-4 mutant is unable to form curled root hairs, a step preceding infection thread formation upon infection by S.meliloti and leading to nodulation. In the hcl-2 mutant, S.meliloti induces extensive root hair deformation and continuous curling, but is unable to induce the formation of tight root hair curls and the subsequent infection threads (PubMed:17586690). In the hcl-2 mutant, there is reduced S.meliloti Nod factor-mediated induction of cortical cell division foci. Impaired asymmetric microtubule network formation in curled root hairs, and failure of activated cortical cells to become polarised and to exhibit the microtubular cytoplasmic bridges characteristic of the pre-infection threads induced by rhizobia (PubMed:11290290). Increased infection threads in nodules due to a slower release of bacteria into the cytoplasm (PubMed:25351493). Normal susceptibility to the root oomycete A.euteiches and to the fungus C.trifolii (PubMed:23432463).</text>
</comment>
<comment type="similarity">
    <text evidence="3">Belongs to the protein kinase superfamily. Ser/Thr protein kinase family.</text>
</comment>
<organism evidence="18">
    <name type="scientific">Medicago truncatula</name>
    <name type="common">Barrel medic</name>
    <name type="synonym">Medicago tribuloides</name>
    <dbReference type="NCBI Taxonomy" id="3880"/>
    <lineage>
        <taxon>Eukaryota</taxon>
        <taxon>Viridiplantae</taxon>
        <taxon>Streptophyta</taxon>
        <taxon>Embryophyta</taxon>
        <taxon>Tracheophyta</taxon>
        <taxon>Spermatophyta</taxon>
        <taxon>Magnoliopsida</taxon>
        <taxon>eudicotyledons</taxon>
        <taxon>Gunneridae</taxon>
        <taxon>Pentapetalae</taxon>
        <taxon>rosids</taxon>
        <taxon>fabids</taxon>
        <taxon>Fabales</taxon>
        <taxon>Fabaceae</taxon>
        <taxon>Papilionoideae</taxon>
        <taxon>50 kb inversion clade</taxon>
        <taxon>NPAAA clade</taxon>
        <taxon>Hologalegina</taxon>
        <taxon>IRL clade</taxon>
        <taxon>Trifolieae</taxon>
        <taxon>Medicago</taxon>
    </lineage>
</organism>
<feature type="signal peptide" evidence="2">
    <location>
        <begin position="1"/>
        <end position="23"/>
    </location>
</feature>
<feature type="chain" id="PRO_5006746948" description="LysM domain receptor-like kinase 3" evidence="2">
    <location>
        <begin position="24"/>
        <end position="620"/>
    </location>
</feature>
<feature type="topological domain" description="Extracellular" evidence="17">
    <location>
        <begin position="24"/>
        <end position="231"/>
    </location>
</feature>
<feature type="transmembrane region" description="Helical" evidence="2">
    <location>
        <begin position="232"/>
        <end position="252"/>
    </location>
</feature>
<feature type="topological domain" description="Cytoplasmic" evidence="17">
    <location>
        <begin position="253"/>
        <end position="620"/>
    </location>
</feature>
<feature type="domain" description="LysM 1; degenerate" evidence="1">
    <location>
        <begin position="46"/>
        <end position="72"/>
    </location>
</feature>
<feature type="domain" description="LysM 2" evidence="5">
    <location>
        <begin position="102"/>
        <end position="148"/>
    </location>
</feature>
<feature type="domain" description="LysM 3" evidence="5">
    <location>
        <begin position="167"/>
        <end position="210"/>
    </location>
</feature>
<feature type="domain" description="Protein kinase" evidence="3">
    <location>
        <begin position="322"/>
        <end position="595"/>
    </location>
</feature>
<feature type="region of interest" description="Disordered" evidence="6">
    <location>
        <begin position="265"/>
        <end position="292"/>
    </location>
</feature>
<feature type="compositionally biased region" description="Polar residues" evidence="6">
    <location>
        <begin position="265"/>
        <end position="278"/>
    </location>
</feature>
<feature type="active site" description="Proton acceptor" evidence="3">
    <location>
        <position position="441"/>
    </location>
</feature>
<feature type="binding site" evidence="1">
    <location>
        <begin position="108"/>
        <end position="114"/>
    </location>
    <ligand>
        <name>chitin</name>
        <dbReference type="ChEBI" id="CHEBI:17029"/>
    </ligand>
</feature>
<feature type="binding site" evidence="1">
    <location>
        <begin position="136"/>
        <end position="142"/>
    </location>
    <ligand>
        <name>chitin</name>
        <dbReference type="ChEBI" id="CHEBI:17029"/>
    </ligand>
</feature>
<feature type="binding site" evidence="3">
    <location>
        <begin position="328"/>
        <end position="336"/>
    </location>
    <ligand>
        <name>ATP</name>
        <dbReference type="ChEBI" id="CHEBI:30616"/>
    </ligand>
</feature>
<feature type="binding site" evidence="3">
    <location>
        <position position="349"/>
    </location>
    <ligand>
        <name>ATP</name>
        <dbReference type="ChEBI" id="CHEBI:30616"/>
    </ligand>
</feature>
<feature type="modified residue" description="Phosphoserine" evidence="1">
    <location>
        <position position="269"/>
    </location>
</feature>
<feature type="modified residue" description="Phosphoserine" evidence="1">
    <location>
        <position position="273"/>
    </location>
</feature>
<feature type="glycosylation site" description="N-linked (GlcNAc...) asparagine" evidence="4">
    <location>
        <position position="46"/>
    </location>
</feature>
<feature type="glycosylation site" description="N-linked (GlcNAc...) asparagine" evidence="4">
    <location>
        <position position="147"/>
    </location>
</feature>
<feature type="glycosylation site" description="N-linked (GlcNAc...) asparagine" evidence="4">
    <location>
        <position position="199"/>
    </location>
</feature>
<feature type="disulfide bond" evidence="1">
    <location>
        <begin position="25"/>
        <end position="92"/>
    </location>
</feature>
<feature type="disulfide bond" evidence="1">
    <location>
        <begin position="29"/>
        <end position="154"/>
    </location>
</feature>
<feature type="disulfide bond" evidence="1">
    <location>
        <begin position="90"/>
        <end position="152"/>
    </location>
</feature>
<feature type="splice variant" id="VSP_058382" description="In isoform 2.">
    <location>
        <begin position="277"/>
        <end position="278"/>
    </location>
</feature>
<feature type="mutagenesis site" description="In hcl-3; S.meliloti induces extensive root hair deformation and continuous curling, but is unable to induce the formation of tight root hair curls and the subsequent infection threads." evidence="7 10">
    <original>P</original>
    <variation>S</variation>
    <location>
        <position position="87"/>
    </location>
</feature>
<feature type="mutagenesis site" description="In hcl-1; S.meliloti induces extensive root hair deformation and continuous curling, but is unable to induce the formation of tight root hair curls and the subsequent infection threads." evidence="7 10">
    <original>G</original>
    <variation>E</variation>
    <location>
        <position position="334"/>
    </location>
</feature>
<feature type="sequence conflict" description="In Ref. 2; CAM06621." evidence="17" ref="2">
    <original>P</original>
    <variation>S</variation>
    <location>
        <position position="87"/>
    </location>
</feature>
<feature type="sequence conflict" description="In Ref. 2; CAM06620." evidence="17" ref="2">
    <original>G</original>
    <variation>E</variation>
    <location>
        <position position="334"/>
    </location>
</feature>
<feature type="strand" evidence="20">
    <location>
        <begin position="29"/>
        <end position="37"/>
    </location>
</feature>
<feature type="helix" evidence="20">
    <location>
        <begin position="44"/>
        <end position="50"/>
    </location>
</feature>
<feature type="strand" evidence="20">
    <location>
        <begin position="53"/>
        <end position="56"/>
    </location>
</feature>
<feature type="helix" evidence="20">
    <location>
        <begin position="61"/>
        <end position="66"/>
    </location>
</feature>
<feature type="strand" evidence="20">
    <location>
        <begin position="83"/>
        <end position="93"/>
    </location>
</feature>
<feature type="turn" evidence="20">
    <location>
        <begin position="94"/>
        <end position="96"/>
    </location>
</feature>
<feature type="strand" evidence="20">
    <location>
        <begin position="97"/>
        <end position="105"/>
    </location>
</feature>
<feature type="helix" evidence="20">
    <location>
        <begin position="112"/>
        <end position="117"/>
    </location>
</feature>
<feature type="turn" evidence="20">
    <location>
        <begin position="118"/>
        <end position="122"/>
    </location>
</feature>
<feature type="helix" evidence="20">
    <location>
        <begin position="126"/>
        <end position="131"/>
    </location>
</feature>
<feature type="strand" evidence="20">
    <location>
        <begin position="145"/>
        <end position="151"/>
    </location>
</feature>
<feature type="turn" evidence="20">
    <location>
        <begin position="157"/>
        <end position="159"/>
    </location>
</feature>
<feature type="strand" evidence="20">
    <location>
        <begin position="160"/>
        <end position="162"/>
    </location>
</feature>
<feature type="strand" evidence="20">
    <location>
        <begin position="166"/>
        <end position="170"/>
    </location>
</feature>
<feature type="helix" evidence="20">
    <location>
        <begin position="177"/>
        <end position="184"/>
    </location>
</feature>
<feature type="helix" evidence="20">
    <location>
        <begin position="188"/>
        <end position="193"/>
    </location>
</feature>
<feature type="turn" evidence="20">
    <location>
        <begin position="194"/>
        <end position="197"/>
    </location>
</feature>
<feature type="strand" evidence="20">
    <location>
        <begin position="205"/>
        <end position="210"/>
    </location>
</feature>
<feature type="helix" evidence="21">
    <location>
        <begin position="312"/>
        <end position="318"/>
    </location>
</feature>
<feature type="turn" evidence="21">
    <location>
        <begin position="319"/>
        <end position="322"/>
    </location>
</feature>
<feature type="turn" evidence="21">
    <location>
        <begin position="324"/>
        <end position="326"/>
    </location>
</feature>
<feature type="strand" evidence="21">
    <location>
        <begin position="327"/>
        <end position="329"/>
    </location>
</feature>
<feature type="strand" evidence="21">
    <location>
        <begin position="332"/>
        <end position="334"/>
    </location>
</feature>
<feature type="strand" evidence="21">
    <location>
        <begin position="336"/>
        <end position="340"/>
    </location>
</feature>
<feature type="strand" evidence="21">
    <location>
        <begin position="342"/>
        <end position="351"/>
    </location>
</feature>
<feature type="helix" evidence="21">
    <location>
        <begin position="357"/>
        <end position="368"/>
    </location>
</feature>
<feature type="strand" evidence="21">
    <location>
        <begin position="377"/>
        <end position="381"/>
    </location>
</feature>
<feature type="strand" evidence="21">
    <location>
        <begin position="383"/>
        <end position="391"/>
    </location>
</feature>
<feature type="helix" evidence="21">
    <location>
        <begin position="398"/>
        <end position="402"/>
    </location>
</feature>
<feature type="strand" evidence="21">
    <location>
        <begin position="405"/>
        <end position="407"/>
    </location>
</feature>
<feature type="helix" evidence="21">
    <location>
        <begin position="412"/>
        <end position="431"/>
    </location>
</feature>
<feature type="strand" evidence="21">
    <location>
        <begin position="432"/>
        <end position="435"/>
    </location>
</feature>
<feature type="helix" evidence="21">
    <location>
        <begin position="444"/>
        <end position="446"/>
    </location>
</feature>
<feature type="strand" evidence="21">
    <location>
        <begin position="447"/>
        <end position="449"/>
    </location>
</feature>
<feature type="strand" evidence="21">
    <location>
        <begin position="455"/>
        <end position="457"/>
    </location>
</feature>
<feature type="helix" evidence="21">
    <location>
        <begin position="462"/>
        <end position="469"/>
    </location>
</feature>
<feature type="helix" evidence="21">
    <location>
        <begin position="486"/>
        <end position="489"/>
    </location>
</feature>
<feature type="helix" evidence="21">
    <location>
        <begin position="497"/>
        <end position="512"/>
    </location>
</feature>
<feature type="helix" evidence="21">
    <location>
        <begin position="530"/>
        <end position="538"/>
    </location>
</feature>
<feature type="strand" evidence="21">
    <location>
        <begin position="539"/>
        <end position="541"/>
    </location>
</feature>
<feature type="helix" evidence="21">
    <location>
        <begin position="543"/>
        <end position="548"/>
    </location>
</feature>
<feature type="helix" evidence="21">
    <location>
        <begin position="553"/>
        <end position="555"/>
    </location>
</feature>
<feature type="helix" evidence="21">
    <location>
        <begin position="561"/>
        <end position="574"/>
    </location>
</feature>
<feature type="helix" evidence="21">
    <location>
        <begin position="579"/>
        <end position="581"/>
    </location>
</feature>
<feature type="helix" evidence="21">
    <location>
        <begin position="585"/>
        <end position="593"/>
    </location>
</feature>